<geneLocation type="chloroplast"/>
<accession>A8Y9A5</accession>
<sequence>MIEVFLFGIVLGLIPITLAGLFVTAYLQYRRGDQLDL</sequence>
<evidence type="ECO:0000255" key="1">
    <source>
        <dbReference type="HAMAP-Rule" id="MF_00432"/>
    </source>
</evidence>
<gene>
    <name evidence="1" type="primary">petG</name>
    <name type="ordered locus">LopeCp058</name>
</gene>
<dbReference type="EMBL" id="AM777385">
    <property type="protein sequence ID" value="CAO85994.1"/>
    <property type="molecule type" value="Genomic_DNA"/>
</dbReference>
<dbReference type="RefSeq" id="YP_001531301.1">
    <property type="nucleotide sequence ID" value="NC_009950.1"/>
</dbReference>
<dbReference type="SMR" id="A8Y9A5"/>
<dbReference type="GeneID" id="5696540"/>
<dbReference type="KEGG" id="lper:5696540"/>
<dbReference type="GO" id="GO:0009535">
    <property type="term" value="C:chloroplast thylakoid membrane"/>
    <property type="evidence" value="ECO:0007669"/>
    <property type="project" value="UniProtKB-SubCell"/>
</dbReference>
<dbReference type="GO" id="GO:0009512">
    <property type="term" value="C:cytochrome b6f complex"/>
    <property type="evidence" value="ECO:0007669"/>
    <property type="project" value="InterPro"/>
</dbReference>
<dbReference type="GO" id="GO:0045158">
    <property type="term" value="F:electron transporter, transferring electrons within cytochrome b6/f complex of photosystem II activity"/>
    <property type="evidence" value="ECO:0007669"/>
    <property type="project" value="UniProtKB-UniRule"/>
</dbReference>
<dbReference type="GO" id="GO:0017004">
    <property type="term" value="P:cytochrome complex assembly"/>
    <property type="evidence" value="ECO:0007669"/>
    <property type="project" value="UniProtKB-UniRule"/>
</dbReference>
<dbReference type="GO" id="GO:0015979">
    <property type="term" value="P:photosynthesis"/>
    <property type="evidence" value="ECO:0007669"/>
    <property type="project" value="UniProtKB-KW"/>
</dbReference>
<dbReference type="HAMAP" id="MF_00432">
    <property type="entry name" value="Cytb6_f_PetG"/>
    <property type="match status" value="1"/>
</dbReference>
<dbReference type="InterPro" id="IPR003683">
    <property type="entry name" value="Cyt_6/f_cplx_su5"/>
</dbReference>
<dbReference type="InterPro" id="IPR036099">
    <property type="entry name" value="Cyt_6/f_cplx_su5_sf"/>
</dbReference>
<dbReference type="NCBIfam" id="NF001907">
    <property type="entry name" value="PRK00665.1"/>
    <property type="match status" value="1"/>
</dbReference>
<dbReference type="Pfam" id="PF02529">
    <property type="entry name" value="PetG"/>
    <property type="match status" value="1"/>
</dbReference>
<dbReference type="PIRSF" id="PIRSF000034">
    <property type="entry name" value="Cyt_b6-f_V"/>
    <property type="match status" value="1"/>
</dbReference>
<dbReference type="SUPFAM" id="SSF103446">
    <property type="entry name" value="PetG subunit of the cytochrome b6f complex"/>
    <property type="match status" value="1"/>
</dbReference>
<name>PETG_LOLPR</name>
<reference key="1">
    <citation type="journal article" date="2008" name="PLoS ONE">
        <title>An optimized chloroplast DNA extraction protocol for grasses (Poaceae) proves suitable for whole plastid genome sequencing and SNP detection.</title>
        <authorList>
            <person name="Diekmann K."/>
            <person name="Hodkinson T.R."/>
            <person name="Fricke E."/>
            <person name="Barth S."/>
        </authorList>
    </citation>
    <scope>NUCLEOTIDE SEQUENCE [LARGE SCALE GENOMIC DNA]</scope>
    <source>
        <strain>cv. Cashel</strain>
    </source>
</reference>
<keyword id="KW-0150">Chloroplast</keyword>
<keyword id="KW-0249">Electron transport</keyword>
<keyword id="KW-0472">Membrane</keyword>
<keyword id="KW-0602">Photosynthesis</keyword>
<keyword id="KW-0934">Plastid</keyword>
<keyword id="KW-0793">Thylakoid</keyword>
<keyword id="KW-0812">Transmembrane</keyword>
<keyword id="KW-1133">Transmembrane helix</keyword>
<keyword id="KW-0813">Transport</keyword>
<organism>
    <name type="scientific">Lolium perenne</name>
    <name type="common">Perennial ryegrass</name>
    <dbReference type="NCBI Taxonomy" id="4522"/>
    <lineage>
        <taxon>Eukaryota</taxon>
        <taxon>Viridiplantae</taxon>
        <taxon>Streptophyta</taxon>
        <taxon>Embryophyta</taxon>
        <taxon>Tracheophyta</taxon>
        <taxon>Spermatophyta</taxon>
        <taxon>Magnoliopsida</taxon>
        <taxon>Liliopsida</taxon>
        <taxon>Poales</taxon>
        <taxon>Poaceae</taxon>
        <taxon>BOP clade</taxon>
        <taxon>Pooideae</taxon>
        <taxon>Poodae</taxon>
        <taxon>Poeae</taxon>
        <taxon>Poeae Chloroplast Group 2 (Poeae type)</taxon>
        <taxon>Loliodinae</taxon>
        <taxon>Loliinae</taxon>
        <taxon>Lolium</taxon>
    </lineage>
</organism>
<comment type="function">
    <text evidence="1">Component of the cytochrome b6-f complex, which mediates electron transfer between photosystem II (PSII) and photosystem I (PSI), cyclic electron flow around PSI, and state transitions. PetG is required for either the stability or assembly of the cytochrome b6-f complex.</text>
</comment>
<comment type="subunit">
    <text evidence="1">The 4 large subunits of the cytochrome b6-f complex are cytochrome b6, subunit IV (17 kDa polypeptide, PetD), cytochrome f and the Rieske protein, while the 4 small subunits are PetG, PetL, PetM and PetN. The complex functions as a dimer.</text>
</comment>
<comment type="subcellular location">
    <subcellularLocation>
        <location evidence="1">Plastid</location>
        <location evidence="1">Chloroplast thylakoid membrane</location>
        <topology evidence="1">Single-pass membrane protein</topology>
    </subcellularLocation>
</comment>
<comment type="similarity">
    <text evidence="1">Belongs to the PetG family.</text>
</comment>
<feature type="chain" id="PRO_0000355397" description="Cytochrome b6-f complex subunit 5">
    <location>
        <begin position="1"/>
        <end position="37"/>
    </location>
</feature>
<feature type="transmembrane region" description="Helical" evidence="1">
    <location>
        <begin position="5"/>
        <end position="25"/>
    </location>
</feature>
<protein>
    <recommendedName>
        <fullName evidence="1">Cytochrome b6-f complex subunit 5</fullName>
    </recommendedName>
    <alternativeName>
        <fullName evidence="1">Cytochrome b6-f complex subunit PetG</fullName>
    </alternativeName>
    <alternativeName>
        <fullName evidence="1">Cytochrome b6-f complex subunit V</fullName>
    </alternativeName>
</protein>
<proteinExistence type="inferred from homology"/>